<keyword id="KW-0010">Activator</keyword>
<keyword id="KW-0238">DNA-binding</keyword>
<keyword id="KW-0804">Transcription</keyword>
<keyword id="KW-0805">Transcription regulation</keyword>
<reference key="1">
    <citation type="journal article" date="1994" name="Eur. J. Biochem.">
        <title>A common system controls the induction of very different genes. The class-A beta-lactamase of Proteus vulgaris and the enterobacterial class-C beta-lactamase.</title>
        <authorList>
            <person name="Datz M."/>
            <person name="Joris B."/>
            <person name="Azab E.A."/>
            <person name="Galleni M."/>
            <person name="van Beeumen J."/>
            <person name="Frere J.-M."/>
            <person name="Martin H.H."/>
        </authorList>
    </citation>
    <scope>NUCLEOTIDE SEQUENCE [GENOMIC DNA]</scope>
    <source>
        <strain>B317</strain>
    </source>
</reference>
<reference key="2">
    <citation type="submission" date="1994-08" db="EMBL/GenBank/DDBJ databases">
        <authorList>
            <person name="Okuguchi M."/>
            <person name="Komai T."/>
            <person name="Makajima N."/>
            <person name="Eguchi H."/>
            <person name="Kuboki A."/>
            <person name="Ito T."/>
            <person name="Meguro M."/>
            <person name="Nakata T."/>
            <person name="Sugimoto K."/>
        </authorList>
    </citation>
    <scope>NUCLEOTIDE SEQUENCE [GENOMIC DNA]</scope>
    <source>
        <strain>5E78-1</strain>
    </source>
</reference>
<name>BLAA_PROVU</name>
<organism>
    <name type="scientific">Proteus vulgaris</name>
    <dbReference type="NCBI Taxonomy" id="585"/>
    <lineage>
        <taxon>Bacteria</taxon>
        <taxon>Pseudomonadati</taxon>
        <taxon>Pseudomonadota</taxon>
        <taxon>Gammaproteobacteria</taxon>
        <taxon>Enterobacterales</taxon>
        <taxon>Morganellaceae</taxon>
        <taxon>Proteus</taxon>
    </lineage>
</organism>
<sequence length="292" mass="33443">MRTHLPLNALRAFEASARHLNFTKAALELYVTQGAVSQQVRMLEERLGVILFKRLPRGLEMTDDAQILFSVLTTAFSDIERVFKQFERGEYRDVVSIAAVGTFAVGWLLPRLAEFRQLYPRIELNLRTNNNVVNLATEGLDFAIRFGEGLWPLTHNKALFSAPLTVLCSSDTAKPLQHPTDLINETLYRSYREDEWLQWFEKANMSPIKITGSIFDPSRLMIESAIYEGGVALAPAKMFSREIENGQLVQPFKIEVELGKYWLTYLKSKPMTASMEIFQQWLMNEALKEISE</sequence>
<proteinExistence type="inferred from homology"/>
<evidence type="ECO:0000255" key="1">
    <source>
        <dbReference type="PROSITE-ProRule" id="PRU00253"/>
    </source>
</evidence>
<evidence type="ECO:0000305" key="2"/>
<dbReference type="EMBL" id="X80128">
    <property type="protein sequence ID" value="CAA56428.1"/>
    <property type="molecule type" value="Genomic_DNA"/>
</dbReference>
<dbReference type="EMBL" id="D37831">
    <property type="protein sequence ID" value="BAA07083.1"/>
    <property type="molecule type" value="Genomic_DNA"/>
</dbReference>
<dbReference type="PIR" id="S51045">
    <property type="entry name" value="S51045"/>
</dbReference>
<dbReference type="SMR" id="P52660"/>
<dbReference type="STRING" id="585.DR95_684"/>
<dbReference type="eggNOG" id="COG0583">
    <property type="taxonomic scope" value="Bacteria"/>
</dbReference>
<dbReference type="GO" id="GO:0003700">
    <property type="term" value="F:DNA-binding transcription factor activity"/>
    <property type="evidence" value="ECO:0007669"/>
    <property type="project" value="InterPro"/>
</dbReference>
<dbReference type="GO" id="GO:0043565">
    <property type="term" value="F:sequence-specific DNA binding"/>
    <property type="evidence" value="ECO:0007669"/>
    <property type="project" value="TreeGrafter"/>
</dbReference>
<dbReference type="GO" id="GO:0006351">
    <property type="term" value="P:DNA-templated transcription"/>
    <property type="evidence" value="ECO:0007669"/>
    <property type="project" value="TreeGrafter"/>
</dbReference>
<dbReference type="CDD" id="cd08487">
    <property type="entry name" value="PBP2_BlaA"/>
    <property type="match status" value="1"/>
</dbReference>
<dbReference type="Gene3D" id="3.40.190.10">
    <property type="entry name" value="Periplasmic binding protein-like II"/>
    <property type="match status" value="2"/>
</dbReference>
<dbReference type="Gene3D" id="1.10.10.10">
    <property type="entry name" value="Winged helix-like DNA-binding domain superfamily/Winged helix DNA-binding domain"/>
    <property type="match status" value="1"/>
</dbReference>
<dbReference type="InterPro" id="IPR037422">
    <property type="entry name" value="BlaA_PBP2"/>
</dbReference>
<dbReference type="InterPro" id="IPR005119">
    <property type="entry name" value="LysR_subst-bd"/>
</dbReference>
<dbReference type="InterPro" id="IPR000847">
    <property type="entry name" value="Tscrpt_reg_HTH_LysR"/>
</dbReference>
<dbReference type="InterPro" id="IPR036388">
    <property type="entry name" value="WH-like_DNA-bd_sf"/>
</dbReference>
<dbReference type="InterPro" id="IPR036390">
    <property type="entry name" value="WH_DNA-bd_sf"/>
</dbReference>
<dbReference type="PANTHER" id="PTHR30537:SF70">
    <property type="entry name" value="HTH-TYPE TRANSCRIPTIONAL ACTIVATOR AMPR"/>
    <property type="match status" value="1"/>
</dbReference>
<dbReference type="PANTHER" id="PTHR30537">
    <property type="entry name" value="HTH-TYPE TRANSCRIPTIONAL REGULATOR"/>
    <property type="match status" value="1"/>
</dbReference>
<dbReference type="Pfam" id="PF00126">
    <property type="entry name" value="HTH_1"/>
    <property type="match status" value="1"/>
</dbReference>
<dbReference type="Pfam" id="PF03466">
    <property type="entry name" value="LysR_substrate"/>
    <property type="match status" value="1"/>
</dbReference>
<dbReference type="PRINTS" id="PR00039">
    <property type="entry name" value="HTHLYSR"/>
</dbReference>
<dbReference type="SUPFAM" id="SSF53850">
    <property type="entry name" value="Periplasmic binding protein-like II"/>
    <property type="match status" value="1"/>
</dbReference>
<dbReference type="SUPFAM" id="SSF46785">
    <property type="entry name" value="Winged helix' DNA-binding domain"/>
    <property type="match status" value="1"/>
</dbReference>
<dbReference type="PROSITE" id="PS50931">
    <property type="entry name" value="HTH_LYSR"/>
    <property type="match status" value="1"/>
</dbReference>
<feature type="chain" id="PRO_0000105595" description="HTH-type transcriptional regulator BlaA">
    <location>
        <begin position="1"/>
        <end position="292"/>
    </location>
</feature>
<feature type="domain" description="HTH lysR-type" evidence="1">
    <location>
        <begin position="5"/>
        <end position="62"/>
    </location>
</feature>
<feature type="DNA-binding region" description="H-T-H motif" evidence="1">
    <location>
        <begin position="22"/>
        <end position="41"/>
    </location>
</feature>
<feature type="sequence variant" description="In strain: 5E78-1.">
    <original>L</original>
    <variation>V</variation>
    <location>
        <position position="124"/>
    </location>
</feature>
<feature type="sequence variant" description="In strain: 5E78-1.">
    <original>D</original>
    <variation>G</variation>
    <location>
        <position position="171"/>
    </location>
</feature>
<feature type="sequence variant" description="In strain: 5E78-1.">
    <original>P</original>
    <variation>R</variation>
    <location>
        <position position="175"/>
    </location>
</feature>
<feature type="sequence variant" description="In strain: 5E78-1.">
    <original>T</original>
    <variation>N</variation>
    <location>
        <position position="186"/>
    </location>
</feature>
<feature type="sequence variant" description="In strain: 5E78-1.">
    <original>P</original>
    <variation>S</variation>
    <location>
        <position position="217"/>
    </location>
</feature>
<feature type="sequence variant" description="In strain: 5E78-1.">
    <original>L</original>
    <variation>M</variation>
    <location>
        <position position="258"/>
    </location>
</feature>
<feature type="sequence variant" description="In strain: 5E78-1.">
    <original>N</original>
    <variation>S</variation>
    <location>
        <position position="284"/>
    </location>
</feature>
<feature type="sequence variant" description="In strain: 5E78-1.">
    <original>I</original>
    <variation>C</variation>
    <location>
        <position position="290"/>
    </location>
</feature>
<comment type="function">
    <text>Positive regulator of the expression of the gene (blaB) for beta-lactamase.</text>
</comment>
<comment type="similarity">
    <text evidence="2">Belongs to the LysR transcriptional regulatory family.</text>
</comment>
<protein>
    <recommendedName>
        <fullName>HTH-type transcriptional regulator BlaA</fullName>
    </recommendedName>
    <alternativeName>
        <fullName>Beta-lactamase regulatory protein BlaA</fullName>
    </alternativeName>
</protein>
<gene>
    <name type="primary">blaA</name>
    <name type="synonym">cumR</name>
</gene>
<accession>P52660</accession>